<proteinExistence type="inferred from homology"/>
<dbReference type="EMBL" id="CP000438">
    <property type="protein sequence ID" value="ABJ13542.1"/>
    <property type="molecule type" value="Genomic_DNA"/>
</dbReference>
<dbReference type="RefSeq" id="WP_003093747.1">
    <property type="nucleotide sequence ID" value="NZ_CP034244.1"/>
</dbReference>
<dbReference type="SMR" id="Q02T88"/>
<dbReference type="GeneID" id="77219190"/>
<dbReference type="KEGG" id="pau:PA14_08750"/>
<dbReference type="PseudoCAP" id="PA14_08750"/>
<dbReference type="HOGENOM" id="CLU_086499_3_2_6"/>
<dbReference type="BioCyc" id="PAER208963:G1G74-728-MONOMER"/>
<dbReference type="Proteomes" id="UP000000653">
    <property type="component" value="Chromosome"/>
</dbReference>
<dbReference type="GO" id="GO:0022625">
    <property type="term" value="C:cytosolic large ribosomal subunit"/>
    <property type="evidence" value="ECO:0007669"/>
    <property type="project" value="TreeGrafter"/>
</dbReference>
<dbReference type="GO" id="GO:0003729">
    <property type="term" value="F:mRNA binding"/>
    <property type="evidence" value="ECO:0007669"/>
    <property type="project" value="TreeGrafter"/>
</dbReference>
<dbReference type="GO" id="GO:0003735">
    <property type="term" value="F:structural constituent of ribosome"/>
    <property type="evidence" value="ECO:0007669"/>
    <property type="project" value="InterPro"/>
</dbReference>
<dbReference type="GO" id="GO:0006412">
    <property type="term" value="P:translation"/>
    <property type="evidence" value="ECO:0007669"/>
    <property type="project" value="UniProtKB-UniRule"/>
</dbReference>
<dbReference type="CDD" id="cd00387">
    <property type="entry name" value="Ribosomal_L7_L12"/>
    <property type="match status" value="1"/>
</dbReference>
<dbReference type="FunFam" id="1.20.5.710:FF:000003">
    <property type="entry name" value="50S ribosomal protein L7/L12"/>
    <property type="match status" value="1"/>
</dbReference>
<dbReference type="FunFam" id="3.30.1390.10:FF:000001">
    <property type="entry name" value="50S ribosomal protein L7/L12"/>
    <property type="match status" value="1"/>
</dbReference>
<dbReference type="Gene3D" id="3.30.1390.10">
    <property type="match status" value="1"/>
</dbReference>
<dbReference type="Gene3D" id="1.20.5.710">
    <property type="entry name" value="Single helix bin"/>
    <property type="match status" value="1"/>
</dbReference>
<dbReference type="HAMAP" id="MF_00368">
    <property type="entry name" value="Ribosomal_bL12"/>
    <property type="match status" value="1"/>
</dbReference>
<dbReference type="InterPro" id="IPR000206">
    <property type="entry name" value="Ribosomal_bL12"/>
</dbReference>
<dbReference type="InterPro" id="IPR013823">
    <property type="entry name" value="Ribosomal_bL12_C"/>
</dbReference>
<dbReference type="InterPro" id="IPR014719">
    <property type="entry name" value="Ribosomal_bL12_C/ClpS-like"/>
</dbReference>
<dbReference type="InterPro" id="IPR008932">
    <property type="entry name" value="Ribosomal_bL12_oligo"/>
</dbReference>
<dbReference type="InterPro" id="IPR036235">
    <property type="entry name" value="Ribosomal_bL12_oligo_N_sf"/>
</dbReference>
<dbReference type="NCBIfam" id="TIGR00855">
    <property type="entry name" value="L12"/>
    <property type="match status" value="1"/>
</dbReference>
<dbReference type="PANTHER" id="PTHR45987">
    <property type="entry name" value="39S RIBOSOMAL PROTEIN L12"/>
    <property type="match status" value="1"/>
</dbReference>
<dbReference type="PANTHER" id="PTHR45987:SF4">
    <property type="entry name" value="LARGE RIBOSOMAL SUBUNIT PROTEIN BL12M"/>
    <property type="match status" value="1"/>
</dbReference>
<dbReference type="Pfam" id="PF00542">
    <property type="entry name" value="Ribosomal_L12"/>
    <property type="match status" value="1"/>
</dbReference>
<dbReference type="Pfam" id="PF16320">
    <property type="entry name" value="Ribosomal_L12_N"/>
    <property type="match status" value="1"/>
</dbReference>
<dbReference type="SUPFAM" id="SSF54736">
    <property type="entry name" value="ClpS-like"/>
    <property type="match status" value="1"/>
</dbReference>
<dbReference type="SUPFAM" id="SSF48300">
    <property type="entry name" value="Ribosomal protein L7/12, oligomerisation (N-terminal) domain"/>
    <property type="match status" value="1"/>
</dbReference>
<gene>
    <name evidence="1" type="primary">rplL</name>
    <name type="ordered locus">PA14_08750</name>
</gene>
<keyword id="KW-0687">Ribonucleoprotein</keyword>
<keyword id="KW-0689">Ribosomal protein</keyword>
<sequence length="122" mass="12479">MALTNEDIINAVSEMSVMQVVELIKAMEEKFGVTAAAATVAAAGPAAAAAEEQTEFTIVLAEAGDKKVNVIKVVRELTGLGLKEAKAVVDGAPGVVKEGASKEEAEAAKKALEEAGAKVELK</sequence>
<protein>
    <recommendedName>
        <fullName evidence="1">Large ribosomal subunit protein bL12</fullName>
    </recommendedName>
    <alternativeName>
        <fullName evidence="2">50S ribosomal protein L7/L12</fullName>
    </alternativeName>
</protein>
<feature type="chain" id="PRO_1000007062" description="Large ribosomal subunit protein bL12">
    <location>
        <begin position="1"/>
        <end position="122"/>
    </location>
</feature>
<evidence type="ECO:0000255" key="1">
    <source>
        <dbReference type="HAMAP-Rule" id="MF_00368"/>
    </source>
</evidence>
<evidence type="ECO:0000305" key="2"/>
<name>RL7_PSEAB</name>
<organism>
    <name type="scientific">Pseudomonas aeruginosa (strain UCBPP-PA14)</name>
    <dbReference type="NCBI Taxonomy" id="208963"/>
    <lineage>
        <taxon>Bacteria</taxon>
        <taxon>Pseudomonadati</taxon>
        <taxon>Pseudomonadota</taxon>
        <taxon>Gammaproteobacteria</taxon>
        <taxon>Pseudomonadales</taxon>
        <taxon>Pseudomonadaceae</taxon>
        <taxon>Pseudomonas</taxon>
    </lineage>
</organism>
<accession>Q02T88</accession>
<reference key="1">
    <citation type="journal article" date="2006" name="Genome Biol.">
        <title>Genomic analysis reveals that Pseudomonas aeruginosa virulence is combinatorial.</title>
        <authorList>
            <person name="Lee D.G."/>
            <person name="Urbach J.M."/>
            <person name="Wu G."/>
            <person name="Liberati N.T."/>
            <person name="Feinbaum R.L."/>
            <person name="Miyata S."/>
            <person name="Diggins L.T."/>
            <person name="He J."/>
            <person name="Saucier M."/>
            <person name="Deziel E."/>
            <person name="Friedman L."/>
            <person name="Li L."/>
            <person name="Grills G."/>
            <person name="Montgomery K."/>
            <person name="Kucherlapati R."/>
            <person name="Rahme L.G."/>
            <person name="Ausubel F.M."/>
        </authorList>
    </citation>
    <scope>NUCLEOTIDE SEQUENCE [LARGE SCALE GENOMIC DNA]</scope>
    <source>
        <strain>UCBPP-PA14</strain>
    </source>
</reference>
<comment type="function">
    <text evidence="1">Forms part of the ribosomal stalk which helps the ribosome interact with GTP-bound translation factors. Is thus essential for accurate translation.</text>
</comment>
<comment type="subunit">
    <text evidence="1">Homodimer. Part of the ribosomal stalk of the 50S ribosomal subunit. Forms a multimeric L10(L12)X complex, where L10 forms an elongated spine to which 2 to 4 L12 dimers bind in a sequential fashion. Binds GTP-bound translation factors.</text>
</comment>
<comment type="similarity">
    <text evidence="1">Belongs to the bacterial ribosomal protein bL12 family.</text>
</comment>